<organism>
    <name type="scientific">Oryza sativa subsp. japonica</name>
    <name type="common">Rice</name>
    <dbReference type="NCBI Taxonomy" id="39947"/>
    <lineage>
        <taxon>Eukaryota</taxon>
        <taxon>Viridiplantae</taxon>
        <taxon>Streptophyta</taxon>
        <taxon>Embryophyta</taxon>
        <taxon>Tracheophyta</taxon>
        <taxon>Spermatophyta</taxon>
        <taxon>Magnoliopsida</taxon>
        <taxon>Liliopsida</taxon>
        <taxon>Poales</taxon>
        <taxon>Poaceae</taxon>
        <taxon>BOP clade</taxon>
        <taxon>Oryzoideae</taxon>
        <taxon>Oryzeae</taxon>
        <taxon>Oryzinae</taxon>
        <taxon>Oryza</taxon>
        <taxon>Oryza sativa</taxon>
    </lineage>
</organism>
<sequence>MSLDELPHKVSDERVNHDTVTSHESEIGSGSISTVSSTVSSVESEKAAYEFLAQTPIKSTDAHLVEFSEAMRTVAKALRRVAEGKAAAQAEAEEWRRKYELEMAHKQQRKIKGYGSCANNELEKLASQLTLETPASDQAGCCGNHGICSHEVLQDESPGPNPRSSHKLVSRKASFRLSWGCNGDKNGQHKHDFVSFEKGDITTAERSNKQILLKWESSPQTVLFITKPNSNSVHVLCAEMVRWLKEHKKINVVVEPRVSKELLTEDSYYNFIQTWDDDEEKKMLHTKVDLIVTLGGDGTVLWAASLFKGPVPPVVAFSLGSLGFMTPFPSEQYRDCLDNVLNGPFSITLRNRLQCHVIRDAAKDELETEEPILVLNEVTIDRGISSYLTYLECYCDSSFVTCVQGDGLIISTTSGSTAYSLAAGGSMVHPQVPGILFTPICPHSLSFRPLILPEYVTLRVQVPHNSRGQAWASFDGKDRKLLSPGDALICSISPWPVPTACLVDSTTDFLRSIHEGLHWNLRKSQSFDGPRD</sequence>
<accession>Q5JK52</accession>
<accession>B7EPH4</accession>
<accession>Q0JFX0</accession>
<comment type="catalytic activity">
    <reaction>
        <text>NAD(+) + ATP = ADP + NADP(+) + H(+)</text>
        <dbReference type="Rhea" id="RHEA:18629"/>
        <dbReference type="ChEBI" id="CHEBI:15378"/>
        <dbReference type="ChEBI" id="CHEBI:30616"/>
        <dbReference type="ChEBI" id="CHEBI:57540"/>
        <dbReference type="ChEBI" id="CHEBI:58349"/>
        <dbReference type="ChEBI" id="CHEBI:456216"/>
        <dbReference type="EC" id="2.7.1.23"/>
    </reaction>
</comment>
<comment type="similarity">
    <text evidence="2">Belongs to the NAD kinase family.</text>
</comment>
<evidence type="ECO:0000256" key="1">
    <source>
        <dbReference type="SAM" id="MobiDB-lite"/>
    </source>
</evidence>
<evidence type="ECO:0000305" key="2"/>
<feature type="chain" id="PRO_0000233703" description="Probable NAD kinase 1">
    <location>
        <begin position="1"/>
        <end position="532"/>
    </location>
</feature>
<feature type="region of interest" description="Disordered" evidence="1">
    <location>
        <begin position="1"/>
        <end position="32"/>
    </location>
</feature>
<feature type="compositionally biased region" description="Basic and acidic residues" evidence="1">
    <location>
        <begin position="1"/>
        <end position="26"/>
    </location>
</feature>
<dbReference type="EC" id="2.7.1.23"/>
<dbReference type="EMBL" id="AP004326">
    <property type="protein sequence ID" value="BAD88145.1"/>
    <property type="molecule type" value="Genomic_DNA"/>
</dbReference>
<dbReference type="EMBL" id="AP008207">
    <property type="protein sequence ID" value="BAF07358.2"/>
    <property type="molecule type" value="Genomic_DNA"/>
</dbReference>
<dbReference type="EMBL" id="AP014957">
    <property type="protein sequence ID" value="BAS76292.1"/>
    <property type="molecule type" value="Genomic_DNA"/>
</dbReference>
<dbReference type="EMBL" id="AK099730">
    <property type="protein sequence ID" value="BAG94271.1"/>
    <property type="molecule type" value="mRNA"/>
</dbReference>
<dbReference type="RefSeq" id="XP_015620998.1">
    <property type="nucleotide sequence ID" value="XM_015765512.1"/>
</dbReference>
<dbReference type="SMR" id="Q5JK52"/>
<dbReference type="FunCoup" id="Q5JK52">
    <property type="interactions" value="2462"/>
</dbReference>
<dbReference type="STRING" id="39947.Q5JK52"/>
<dbReference type="PaxDb" id="39947-Q5JK52"/>
<dbReference type="EnsemblPlants" id="Os01t0957000-01">
    <property type="protein sequence ID" value="Os01t0957000-01"/>
    <property type="gene ID" value="Os01g0957000"/>
</dbReference>
<dbReference type="Gramene" id="Os01t0957000-01">
    <property type="protein sequence ID" value="Os01t0957000-01"/>
    <property type="gene ID" value="Os01g0957000"/>
</dbReference>
<dbReference type="KEGG" id="dosa:Os01g0957000"/>
<dbReference type="eggNOG" id="KOG2178">
    <property type="taxonomic scope" value="Eukaryota"/>
</dbReference>
<dbReference type="InParanoid" id="Q5JK52"/>
<dbReference type="OMA" id="CCKGEQS"/>
<dbReference type="OrthoDB" id="24581at2759"/>
<dbReference type="BRENDA" id="2.7.1.23">
    <property type="organism ID" value="8948"/>
</dbReference>
<dbReference type="Proteomes" id="UP000000763">
    <property type="component" value="Chromosome 1"/>
</dbReference>
<dbReference type="Proteomes" id="UP000059680">
    <property type="component" value="Chromosome 1"/>
</dbReference>
<dbReference type="ExpressionAtlas" id="Q5JK52">
    <property type="expression patterns" value="baseline and differential"/>
</dbReference>
<dbReference type="GO" id="GO:0005524">
    <property type="term" value="F:ATP binding"/>
    <property type="evidence" value="ECO:0007669"/>
    <property type="project" value="UniProtKB-KW"/>
</dbReference>
<dbReference type="GO" id="GO:0003951">
    <property type="term" value="F:NAD+ kinase activity"/>
    <property type="evidence" value="ECO:0000318"/>
    <property type="project" value="GO_Central"/>
</dbReference>
<dbReference type="GO" id="GO:0019674">
    <property type="term" value="P:NAD metabolic process"/>
    <property type="evidence" value="ECO:0007669"/>
    <property type="project" value="InterPro"/>
</dbReference>
<dbReference type="GO" id="GO:0006741">
    <property type="term" value="P:NADP biosynthetic process"/>
    <property type="evidence" value="ECO:0000318"/>
    <property type="project" value="GO_Central"/>
</dbReference>
<dbReference type="FunFam" id="3.40.50.10330:FF:000018">
    <property type="entry name" value="Probable NAD kinase 1"/>
    <property type="match status" value="1"/>
</dbReference>
<dbReference type="FunFam" id="2.60.200.30:FF:000006">
    <property type="entry name" value="probable NAD kinase 1"/>
    <property type="match status" value="1"/>
</dbReference>
<dbReference type="Gene3D" id="3.40.50.10330">
    <property type="entry name" value="Probable inorganic polyphosphate/atp-NAD kinase, domain 1"/>
    <property type="match status" value="1"/>
</dbReference>
<dbReference type="Gene3D" id="2.60.200.30">
    <property type="entry name" value="Probable inorganic polyphosphate/atp-NAD kinase, domain 2"/>
    <property type="match status" value="1"/>
</dbReference>
<dbReference type="HAMAP" id="MF_00361">
    <property type="entry name" value="NAD_kinase"/>
    <property type="match status" value="1"/>
</dbReference>
<dbReference type="InterPro" id="IPR017438">
    <property type="entry name" value="ATP-NAD_kinase_N"/>
</dbReference>
<dbReference type="InterPro" id="IPR017437">
    <property type="entry name" value="ATP-NAD_kinase_PpnK-typ_C"/>
</dbReference>
<dbReference type="InterPro" id="IPR016064">
    <property type="entry name" value="NAD/diacylglycerol_kinase_sf"/>
</dbReference>
<dbReference type="InterPro" id="IPR002504">
    <property type="entry name" value="NADK"/>
</dbReference>
<dbReference type="PANTHER" id="PTHR20275">
    <property type="entry name" value="NAD KINASE"/>
    <property type="match status" value="1"/>
</dbReference>
<dbReference type="PANTHER" id="PTHR20275:SF0">
    <property type="entry name" value="NAD KINASE"/>
    <property type="match status" value="1"/>
</dbReference>
<dbReference type="Pfam" id="PF01513">
    <property type="entry name" value="NAD_kinase"/>
    <property type="match status" value="1"/>
</dbReference>
<dbReference type="Pfam" id="PF20143">
    <property type="entry name" value="NAD_kinase_C"/>
    <property type="match status" value="1"/>
</dbReference>
<dbReference type="SUPFAM" id="SSF111331">
    <property type="entry name" value="NAD kinase/diacylglycerol kinase-like"/>
    <property type="match status" value="1"/>
</dbReference>
<keyword id="KW-0067">ATP-binding</keyword>
<keyword id="KW-0418">Kinase</keyword>
<keyword id="KW-0520">NAD</keyword>
<keyword id="KW-0521">NADP</keyword>
<keyword id="KW-0547">Nucleotide-binding</keyword>
<keyword id="KW-1185">Reference proteome</keyword>
<keyword id="KW-0808">Transferase</keyword>
<protein>
    <recommendedName>
        <fullName>Probable NAD kinase 1</fullName>
        <ecNumber>2.7.1.23</ecNumber>
    </recommendedName>
</protein>
<reference key="1">
    <citation type="journal article" date="2002" name="Nature">
        <title>The genome sequence and structure of rice chromosome 1.</title>
        <authorList>
            <person name="Sasaki T."/>
            <person name="Matsumoto T."/>
            <person name="Yamamoto K."/>
            <person name="Sakata K."/>
            <person name="Baba T."/>
            <person name="Katayose Y."/>
            <person name="Wu J."/>
            <person name="Niimura Y."/>
            <person name="Cheng Z."/>
            <person name="Nagamura Y."/>
            <person name="Antonio B.A."/>
            <person name="Kanamori H."/>
            <person name="Hosokawa S."/>
            <person name="Masukawa M."/>
            <person name="Arikawa K."/>
            <person name="Chiden Y."/>
            <person name="Hayashi M."/>
            <person name="Okamoto M."/>
            <person name="Ando T."/>
            <person name="Aoki H."/>
            <person name="Arita K."/>
            <person name="Hamada M."/>
            <person name="Harada C."/>
            <person name="Hijishita S."/>
            <person name="Honda M."/>
            <person name="Ichikawa Y."/>
            <person name="Idonuma A."/>
            <person name="Iijima M."/>
            <person name="Ikeda M."/>
            <person name="Ikeno M."/>
            <person name="Ito S."/>
            <person name="Ito T."/>
            <person name="Ito Y."/>
            <person name="Ito Y."/>
            <person name="Iwabuchi A."/>
            <person name="Kamiya K."/>
            <person name="Karasawa W."/>
            <person name="Katagiri S."/>
            <person name="Kikuta A."/>
            <person name="Kobayashi N."/>
            <person name="Kono I."/>
            <person name="Machita K."/>
            <person name="Maehara T."/>
            <person name="Mizuno H."/>
            <person name="Mizubayashi T."/>
            <person name="Mukai Y."/>
            <person name="Nagasaki H."/>
            <person name="Nakashima M."/>
            <person name="Nakama Y."/>
            <person name="Nakamichi Y."/>
            <person name="Nakamura M."/>
            <person name="Namiki N."/>
            <person name="Negishi M."/>
            <person name="Ohta I."/>
            <person name="Ono N."/>
            <person name="Saji S."/>
            <person name="Sakai K."/>
            <person name="Shibata M."/>
            <person name="Shimokawa T."/>
            <person name="Shomura A."/>
            <person name="Song J."/>
            <person name="Takazaki Y."/>
            <person name="Terasawa K."/>
            <person name="Tsuji K."/>
            <person name="Waki K."/>
            <person name="Yamagata H."/>
            <person name="Yamane H."/>
            <person name="Yoshiki S."/>
            <person name="Yoshihara R."/>
            <person name="Yukawa K."/>
            <person name="Zhong H."/>
            <person name="Iwama H."/>
            <person name="Endo T."/>
            <person name="Ito H."/>
            <person name="Hahn J.H."/>
            <person name="Kim H.-I."/>
            <person name="Eun M.-Y."/>
            <person name="Yano M."/>
            <person name="Jiang J."/>
            <person name="Gojobori T."/>
        </authorList>
    </citation>
    <scope>NUCLEOTIDE SEQUENCE [LARGE SCALE GENOMIC DNA]</scope>
    <source>
        <strain>cv. Nipponbare</strain>
    </source>
</reference>
<reference key="2">
    <citation type="journal article" date="2005" name="Nature">
        <title>The map-based sequence of the rice genome.</title>
        <authorList>
            <consortium name="International rice genome sequencing project (IRGSP)"/>
        </authorList>
    </citation>
    <scope>NUCLEOTIDE SEQUENCE [LARGE SCALE GENOMIC DNA]</scope>
    <source>
        <strain>cv. Nipponbare</strain>
    </source>
</reference>
<reference key="3">
    <citation type="journal article" date="2008" name="Nucleic Acids Res.">
        <title>The rice annotation project database (RAP-DB): 2008 update.</title>
        <authorList>
            <consortium name="The rice annotation project (RAP)"/>
        </authorList>
    </citation>
    <scope>GENOME REANNOTATION</scope>
    <source>
        <strain>cv. Nipponbare</strain>
    </source>
</reference>
<reference key="4">
    <citation type="journal article" date="2013" name="Rice">
        <title>Improvement of the Oryza sativa Nipponbare reference genome using next generation sequence and optical map data.</title>
        <authorList>
            <person name="Kawahara Y."/>
            <person name="de la Bastide M."/>
            <person name="Hamilton J.P."/>
            <person name="Kanamori H."/>
            <person name="McCombie W.R."/>
            <person name="Ouyang S."/>
            <person name="Schwartz D.C."/>
            <person name="Tanaka T."/>
            <person name="Wu J."/>
            <person name="Zhou S."/>
            <person name="Childs K.L."/>
            <person name="Davidson R.M."/>
            <person name="Lin H."/>
            <person name="Quesada-Ocampo L."/>
            <person name="Vaillancourt B."/>
            <person name="Sakai H."/>
            <person name="Lee S.S."/>
            <person name="Kim J."/>
            <person name="Numa H."/>
            <person name="Itoh T."/>
            <person name="Buell C.R."/>
            <person name="Matsumoto T."/>
        </authorList>
    </citation>
    <scope>GENOME REANNOTATION</scope>
    <source>
        <strain>cv. Nipponbare</strain>
    </source>
</reference>
<reference key="5">
    <citation type="journal article" date="2003" name="Science">
        <title>Collection, mapping, and annotation of over 28,000 cDNA clones from japonica rice.</title>
        <authorList>
            <consortium name="The rice full-length cDNA consortium"/>
        </authorList>
    </citation>
    <scope>NUCLEOTIDE SEQUENCE [LARGE SCALE MRNA]</scope>
    <source>
        <strain>cv. Nipponbare</strain>
    </source>
</reference>
<gene>
    <name type="ordered locus">Os01g0957000</name>
    <name type="ordered locus">LOC_Os01g72690</name>
    <name type="ORF">OJ1294_F06.11</name>
</gene>
<name>NADK1_ORYSJ</name>
<proteinExistence type="evidence at transcript level"/>